<gene>
    <name evidence="1" type="primary">napA</name>
    <name type="ordered locus">BB2800</name>
</gene>
<name>NAPA_BORBR</name>
<accession>Q7WIQ1</accession>
<dbReference type="EC" id="1.9.6.1" evidence="1"/>
<dbReference type="EMBL" id="BX640445">
    <property type="protein sequence ID" value="CAE33292.1"/>
    <property type="molecule type" value="Genomic_DNA"/>
</dbReference>
<dbReference type="SMR" id="Q7WIQ1"/>
<dbReference type="KEGG" id="bbr:BB2800"/>
<dbReference type="eggNOG" id="COG0243">
    <property type="taxonomic scope" value="Bacteria"/>
</dbReference>
<dbReference type="HOGENOM" id="CLU_000422_13_4_4"/>
<dbReference type="Proteomes" id="UP000001027">
    <property type="component" value="Chromosome"/>
</dbReference>
<dbReference type="GO" id="GO:0016020">
    <property type="term" value="C:membrane"/>
    <property type="evidence" value="ECO:0007669"/>
    <property type="project" value="TreeGrafter"/>
</dbReference>
<dbReference type="GO" id="GO:0009325">
    <property type="term" value="C:nitrate reductase complex"/>
    <property type="evidence" value="ECO:0007669"/>
    <property type="project" value="TreeGrafter"/>
</dbReference>
<dbReference type="GO" id="GO:0042597">
    <property type="term" value="C:periplasmic space"/>
    <property type="evidence" value="ECO:0007669"/>
    <property type="project" value="UniProtKB-SubCell"/>
</dbReference>
<dbReference type="GO" id="GO:0051539">
    <property type="term" value="F:4 iron, 4 sulfur cluster binding"/>
    <property type="evidence" value="ECO:0007669"/>
    <property type="project" value="UniProtKB-KW"/>
</dbReference>
<dbReference type="GO" id="GO:0009055">
    <property type="term" value="F:electron transfer activity"/>
    <property type="evidence" value="ECO:0007669"/>
    <property type="project" value="UniProtKB-UniRule"/>
</dbReference>
<dbReference type="GO" id="GO:0005506">
    <property type="term" value="F:iron ion binding"/>
    <property type="evidence" value="ECO:0007669"/>
    <property type="project" value="UniProtKB-UniRule"/>
</dbReference>
<dbReference type="GO" id="GO:0030151">
    <property type="term" value="F:molybdenum ion binding"/>
    <property type="evidence" value="ECO:0007669"/>
    <property type="project" value="InterPro"/>
</dbReference>
<dbReference type="GO" id="GO:0043546">
    <property type="term" value="F:molybdopterin cofactor binding"/>
    <property type="evidence" value="ECO:0007669"/>
    <property type="project" value="InterPro"/>
</dbReference>
<dbReference type="GO" id="GO:0050140">
    <property type="term" value="F:nitrate reductase (cytochrome) activity"/>
    <property type="evidence" value="ECO:0007669"/>
    <property type="project" value="UniProtKB-EC"/>
</dbReference>
<dbReference type="GO" id="GO:0045333">
    <property type="term" value="P:cellular respiration"/>
    <property type="evidence" value="ECO:0007669"/>
    <property type="project" value="UniProtKB-ARBA"/>
</dbReference>
<dbReference type="GO" id="GO:0006777">
    <property type="term" value="P:Mo-molybdopterin cofactor biosynthetic process"/>
    <property type="evidence" value="ECO:0007669"/>
    <property type="project" value="UniProtKB-UniRule"/>
</dbReference>
<dbReference type="GO" id="GO:0042128">
    <property type="term" value="P:nitrate assimilation"/>
    <property type="evidence" value="ECO:0007669"/>
    <property type="project" value="UniProtKB-UniRule"/>
</dbReference>
<dbReference type="CDD" id="cd02791">
    <property type="entry name" value="MopB_CT_Nitrate-R-NapA-like"/>
    <property type="match status" value="1"/>
</dbReference>
<dbReference type="CDD" id="cd02754">
    <property type="entry name" value="MopB_Nitrate-R-NapA-like"/>
    <property type="match status" value="1"/>
</dbReference>
<dbReference type="FunFam" id="2.40.40.20:FF:000005">
    <property type="entry name" value="Periplasmic nitrate reductase"/>
    <property type="match status" value="1"/>
</dbReference>
<dbReference type="Gene3D" id="2.40.40.20">
    <property type="match status" value="1"/>
</dbReference>
<dbReference type="Gene3D" id="3.30.200.210">
    <property type="match status" value="1"/>
</dbReference>
<dbReference type="Gene3D" id="3.40.50.740">
    <property type="match status" value="1"/>
</dbReference>
<dbReference type="Gene3D" id="3.40.228.10">
    <property type="entry name" value="Dimethylsulfoxide Reductase, domain 2"/>
    <property type="match status" value="1"/>
</dbReference>
<dbReference type="HAMAP" id="MF_01630">
    <property type="entry name" value="Nitrate_reduct_NapA"/>
    <property type="match status" value="1"/>
</dbReference>
<dbReference type="InterPro" id="IPR009010">
    <property type="entry name" value="Asp_de-COase-like_dom_sf"/>
</dbReference>
<dbReference type="InterPro" id="IPR041957">
    <property type="entry name" value="CT_Nitrate-R-NapA-like"/>
</dbReference>
<dbReference type="InterPro" id="IPR006657">
    <property type="entry name" value="MoPterin_dinucl-bd_dom"/>
</dbReference>
<dbReference type="InterPro" id="IPR006656">
    <property type="entry name" value="Mopterin_OxRdtase"/>
</dbReference>
<dbReference type="InterPro" id="IPR006963">
    <property type="entry name" value="Mopterin_OxRdtase_4Fe-4S_dom"/>
</dbReference>
<dbReference type="InterPro" id="IPR027467">
    <property type="entry name" value="MopterinOxRdtase_cofactor_BS"/>
</dbReference>
<dbReference type="InterPro" id="IPR010051">
    <property type="entry name" value="Periplasm_NO3_reductase_lsu"/>
</dbReference>
<dbReference type="InterPro" id="IPR050123">
    <property type="entry name" value="Prok_molybdopt-oxidoreductase"/>
</dbReference>
<dbReference type="InterPro" id="IPR019546">
    <property type="entry name" value="TAT_signal_bac_arc"/>
</dbReference>
<dbReference type="NCBIfam" id="TIGR01706">
    <property type="entry name" value="NAPA"/>
    <property type="match status" value="1"/>
</dbReference>
<dbReference type="NCBIfam" id="NF010055">
    <property type="entry name" value="PRK13532.1"/>
    <property type="match status" value="1"/>
</dbReference>
<dbReference type="NCBIfam" id="TIGR01409">
    <property type="entry name" value="TAT_signal_seq"/>
    <property type="match status" value="1"/>
</dbReference>
<dbReference type="PANTHER" id="PTHR43105:SF11">
    <property type="entry name" value="PERIPLASMIC NITRATE REDUCTASE"/>
    <property type="match status" value="1"/>
</dbReference>
<dbReference type="PANTHER" id="PTHR43105">
    <property type="entry name" value="RESPIRATORY NITRATE REDUCTASE"/>
    <property type="match status" value="1"/>
</dbReference>
<dbReference type="Pfam" id="PF04879">
    <property type="entry name" value="Molybdop_Fe4S4"/>
    <property type="match status" value="1"/>
</dbReference>
<dbReference type="Pfam" id="PF00384">
    <property type="entry name" value="Molybdopterin"/>
    <property type="match status" value="1"/>
</dbReference>
<dbReference type="Pfam" id="PF01568">
    <property type="entry name" value="Molydop_binding"/>
    <property type="match status" value="1"/>
</dbReference>
<dbReference type="SMART" id="SM00926">
    <property type="entry name" value="Molybdop_Fe4S4"/>
    <property type="match status" value="1"/>
</dbReference>
<dbReference type="SUPFAM" id="SSF50692">
    <property type="entry name" value="ADC-like"/>
    <property type="match status" value="1"/>
</dbReference>
<dbReference type="SUPFAM" id="SSF53706">
    <property type="entry name" value="Formate dehydrogenase/DMSO reductase, domains 1-3"/>
    <property type="match status" value="1"/>
</dbReference>
<dbReference type="PROSITE" id="PS51669">
    <property type="entry name" value="4FE4S_MOW_BIS_MGD"/>
    <property type="match status" value="1"/>
</dbReference>
<dbReference type="PROSITE" id="PS00551">
    <property type="entry name" value="MOLYBDOPTERIN_PROK_1"/>
    <property type="match status" value="1"/>
</dbReference>
<evidence type="ECO:0000255" key="1">
    <source>
        <dbReference type="HAMAP-Rule" id="MF_01630"/>
    </source>
</evidence>
<feature type="signal peptide" description="Tat-type signal" evidence="1">
    <location>
        <begin position="1"/>
        <end position="36"/>
    </location>
</feature>
<feature type="chain" id="PRO_0000045977" description="Periplasmic nitrate reductase" evidence="1">
    <location>
        <begin position="37"/>
        <end position="829"/>
    </location>
</feature>
<feature type="domain" description="4Fe-4S Mo/W bis-MGD-type" evidence="1">
    <location>
        <begin position="39"/>
        <end position="95"/>
    </location>
</feature>
<feature type="binding site" evidence="1">
    <location>
        <position position="46"/>
    </location>
    <ligand>
        <name>[4Fe-4S] cluster</name>
        <dbReference type="ChEBI" id="CHEBI:49883"/>
    </ligand>
</feature>
<feature type="binding site" evidence="1">
    <location>
        <position position="49"/>
    </location>
    <ligand>
        <name>[4Fe-4S] cluster</name>
        <dbReference type="ChEBI" id="CHEBI:49883"/>
    </ligand>
</feature>
<feature type="binding site" evidence="1">
    <location>
        <position position="53"/>
    </location>
    <ligand>
        <name>[4Fe-4S] cluster</name>
        <dbReference type="ChEBI" id="CHEBI:49883"/>
    </ligand>
</feature>
<feature type="binding site" evidence="1">
    <location>
        <position position="81"/>
    </location>
    <ligand>
        <name>[4Fe-4S] cluster</name>
        <dbReference type="ChEBI" id="CHEBI:49883"/>
    </ligand>
</feature>
<feature type="binding site" evidence="1">
    <location>
        <position position="83"/>
    </location>
    <ligand>
        <name>Mo-bis(molybdopterin guanine dinucleotide)</name>
        <dbReference type="ChEBI" id="CHEBI:60539"/>
    </ligand>
</feature>
<feature type="binding site" evidence="1">
    <location>
        <position position="150"/>
    </location>
    <ligand>
        <name>Mo-bis(molybdopterin guanine dinucleotide)</name>
        <dbReference type="ChEBI" id="CHEBI:60539"/>
    </ligand>
</feature>
<feature type="binding site" evidence="1">
    <location>
        <position position="175"/>
    </location>
    <ligand>
        <name>Mo-bis(molybdopterin guanine dinucleotide)</name>
        <dbReference type="ChEBI" id="CHEBI:60539"/>
    </ligand>
</feature>
<feature type="binding site" evidence="1">
    <location>
        <position position="179"/>
    </location>
    <ligand>
        <name>Mo-bis(molybdopterin guanine dinucleotide)</name>
        <dbReference type="ChEBI" id="CHEBI:60539"/>
    </ligand>
</feature>
<feature type="binding site" evidence="1">
    <location>
        <begin position="212"/>
        <end position="219"/>
    </location>
    <ligand>
        <name>Mo-bis(molybdopterin guanine dinucleotide)</name>
        <dbReference type="ChEBI" id="CHEBI:60539"/>
    </ligand>
</feature>
<feature type="binding site" evidence="1">
    <location>
        <begin position="243"/>
        <end position="247"/>
    </location>
    <ligand>
        <name>Mo-bis(molybdopterin guanine dinucleotide)</name>
        <dbReference type="ChEBI" id="CHEBI:60539"/>
    </ligand>
</feature>
<feature type="binding site" evidence="1">
    <location>
        <begin position="262"/>
        <end position="264"/>
    </location>
    <ligand>
        <name>Mo-bis(molybdopterin guanine dinucleotide)</name>
        <dbReference type="ChEBI" id="CHEBI:60539"/>
    </ligand>
</feature>
<feature type="binding site" evidence="1">
    <location>
        <position position="373"/>
    </location>
    <ligand>
        <name>Mo-bis(molybdopterin guanine dinucleotide)</name>
        <dbReference type="ChEBI" id="CHEBI:60539"/>
    </ligand>
</feature>
<feature type="binding site" evidence="1">
    <location>
        <position position="377"/>
    </location>
    <ligand>
        <name>Mo-bis(molybdopterin guanine dinucleotide)</name>
        <dbReference type="ChEBI" id="CHEBI:60539"/>
    </ligand>
</feature>
<feature type="binding site" evidence="1">
    <location>
        <position position="483"/>
    </location>
    <ligand>
        <name>Mo-bis(molybdopterin guanine dinucleotide)</name>
        <dbReference type="ChEBI" id="CHEBI:60539"/>
    </ligand>
</feature>
<feature type="binding site" evidence="1">
    <location>
        <begin position="509"/>
        <end position="510"/>
    </location>
    <ligand>
        <name>Mo-bis(molybdopterin guanine dinucleotide)</name>
        <dbReference type="ChEBI" id="CHEBI:60539"/>
    </ligand>
</feature>
<feature type="binding site" evidence="1">
    <location>
        <position position="532"/>
    </location>
    <ligand>
        <name>Mo-bis(molybdopterin guanine dinucleotide)</name>
        <dbReference type="ChEBI" id="CHEBI:60539"/>
    </ligand>
</feature>
<feature type="binding site" evidence="1">
    <location>
        <position position="559"/>
    </location>
    <ligand>
        <name>Mo-bis(molybdopterin guanine dinucleotide)</name>
        <dbReference type="ChEBI" id="CHEBI:60539"/>
    </ligand>
</feature>
<feature type="binding site" evidence="1">
    <location>
        <begin position="719"/>
        <end position="728"/>
    </location>
    <ligand>
        <name>Mo-bis(molybdopterin guanine dinucleotide)</name>
        <dbReference type="ChEBI" id="CHEBI:60539"/>
    </ligand>
</feature>
<feature type="binding site" evidence="1">
    <location>
        <position position="795"/>
    </location>
    <ligand>
        <name>substrate</name>
    </ligand>
</feature>
<feature type="binding site" evidence="1">
    <location>
        <position position="803"/>
    </location>
    <ligand>
        <name>Mo-bis(molybdopterin guanine dinucleotide)</name>
        <dbReference type="ChEBI" id="CHEBI:60539"/>
    </ligand>
</feature>
<feature type="binding site" evidence="1">
    <location>
        <position position="820"/>
    </location>
    <ligand>
        <name>Mo-bis(molybdopterin guanine dinucleotide)</name>
        <dbReference type="ChEBI" id="CHEBI:60539"/>
    </ligand>
</feature>
<comment type="function">
    <text evidence="1">Catalytic subunit of the periplasmic nitrate reductase complex NapAB. Receives electrons from NapB and catalyzes the reduction of nitrate to nitrite.</text>
</comment>
<comment type="catalytic activity">
    <reaction evidence="1">
        <text>2 Fe(II)-[cytochrome] + nitrate + 2 H(+) = 2 Fe(III)-[cytochrome] + nitrite + H2O</text>
        <dbReference type="Rhea" id="RHEA:12909"/>
        <dbReference type="Rhea" id="RHEA-COMP:11777"/>
        <dbReference type="Rhea" id="RHEA-COMP:11778"/>
        <dbReference type="ChEBI" id="CHEBI:15377"/>
        <dbReference type="ChEBI" id="CHEBI:15378"/>
        <dbReference type="ChEBI" id="CHEBI:16301"/>
        <dbReference type="ChEBI" id="CHEBI:17632"/>
        <dbReference type="ChEBI" id="CHEBI:29033"/>
        <dbReference type="ChEBI" id="CHEBI:29034"/>
        <dbReference type="EC" id="1.9.6.1"/>
    </reaction>
</comment>
<comment type="cofactor">
    <cofactor evidence="1">
        <name>[4Fe-4S] cluster</name>
        <dbReference type="ChEBI" id="CHEBI:49883"/>
    </cofactor>
    <text evidence="1">Binds 1 [4Fe-4S] cluster.</text>
</comment>
<comment type="cofactor">
    <cofactor evidence="1">
        <name>Mo-bis(molybdopterin guanine dinucleotide)</name>
        <dbReference type="ChEBI" id="CHEBI:60539"/>
    </cofactor>
    <text evidence="1">Binds 1 molybdenum-bis(molybdopterin guanine dinucleotide) (Mo-bis-MGD) cofactor per subunit.</text>
</comment>
<comment type="subunit">
    <text evidence="1">Component of the periplasmic nitrate reductase NapAB complex composed of NapA and NapB.</text>
</comment>
<comment type="subcellular location">
    <subcellularLocation>
        <location evidence="1">Periplasm</location>
    </subcellularLocation>
</comment>
<comment type="PTM">
    <text evidence="1">Predicted to be exported by the Tat system. The position of the signal peptide cleavage has not been experimentally proven.</text>
</comment>
<comment type="similarity">
    <text evidence="1">Belongs to the prokaryotic molybdopterin-containing oxidoreductase family. NasA/NapA/NarB subfamily.</text>
</comment>
<reference key="1">
    <citation type="journal article" date="2003" name="Nat. Genet.">
        <title>Comparative analysis of the genome sequences of Bordetella pertussis, Bordetella parapertussis and Bordetella bronchiseptica.</title>
        <authorList>
            <person name="Parkhill J."/>
            <person name="Sebaihia M."/>
            <person name="Preston A."/>
            <person name="Murphy L.D."/>
            <person name="Thomson N.R."/>
            <person name="Harris D.E."/>
            <person name="Holden M.T.G."/>
            <person name="Churcher C.M."/>
            <person name="Bentley S.D."/>
            <person name="Mungall K.L."/>
            <person name="Cerdeno-Tarraga A.-M."/>
            <person name="Temple L."/>
            <person name="James K.D."/>
            <person name="Harris B."/>
            <person name="Quail M.A."/>
            <person name="Achtman M."/>
            <person name="Atkin R."/>
            <person name="Baker S."/>
            <person name="Basham D."/>
            <person name="Bason N."/>
            <person name="Cherevach I."/>
            <person name="Chillingworth T."/>
            <person name="Collins M."/>
            <person name="Cronin A."/>
            <person name="Davis P."/>
            <person name="Doggett J."/>
            <person name="Feltwell T."/>
            <person name="Goble A."/>
            <person name="Hamlin N."/>
            <person name="Hauser H."/>
            <person name="Holroyd S."/>
            <person name="Jagels K."/>
            <person name="Leather S."/>
            <person name="Moule S."/>
            <person name="Norberczak H."/>
            <person name="O'Neil S."/>
            <person name="Ormond D."/>
            <person name="Price C."/>
            <person name="Rabbinowitsch E."/>
            <person name="Rutter S."/>
            <person name="Sanders M."/>
            <person name="Saunders D."/>
            <person name="Seeger K."/>
            <person name="Sharp S."/>
            <person name="Simmonds M."/>
            <person name="Skelton J."/>
            <person name="Squares R."/>
            <person name="Squares S."/>
            <person name="Stevens K."/>
            <person name="Unwin L."/>
            <person name="Whitehead S."/>
            <person name="Barrell B.G."/>
            <person name="Maskell D.J."/>
        </authorList>
    </citation>
    <scope>NUCLEOTIDE SEQUENCE [LARGE SCALE GENOMIC DNA]</scope>
    <source>
        <strain>ATCC BAA-588 / NCTC 13252 / RB50</strain>
    </source>
</reference>
<sequence>MARRDFIKQTAAAAAATVAGVPLTGYTQNIVTESEAAKLKWSKAPCRFCGTGCGVNVAVKDNQVVATHGDFNAEVNKGLNCVKGYFLSKIMYGSDRLTQPLLRMKDGKYAKDGEFAPVSWDQAFDVMAEQFKRVLKDKGPEAVGMFGSGQWTVWEGYAALKLMKAGFRTNNLDPNARHCMASAAVGFMRTFGADEPMGCYDDIENADAFVLWGSNMAEMHPILWTRVTDRRLSAPATKVAVLSTFEHRSYELADLTLTFEPQSDLAILNYIANHIIRTKRVNRDFVDKHTVFREGNADIGYGLRPEHPLQQAARNAGDAGGSKPITFDDFARFVSKYDLEYTAKLSGVPKNRLEELAELYADPKVRVTSFWTMGFNQHTRGVWCNNMVYNIHLLTGKISTPGNSPFSLTGQPSACGTAREVGTFSHRLPADLVVTNPEHRRHAEEIWKLPDGTIPSKVGAHAVLQNRMLKDGKINAYWVMVNNNMQAAANLMNEGLPGYRNPENFIVVSDAYPTVTTLSADLILPAAMWVEKEGAYGNAERRTQFWHQLVDAPGQARSDLWQLVEFSKRFKVEEVWPADLLAKKPEYRGKTLYDVLFANGKVNQFPNTELDAEYANQEAQAFGFYLQKGLFEEYAEFGRGHGHDLAPFDVYHKARGLRWPVVDGKETLWRYREGSDPYVKPGTGFQFYGNPDGKAVIFALPYEPPPEAPDKEYPFWLSTGRVLEHWHSGSMTRRVPELYKAFPEAVCFMHPDDAQALGVRRGVEVEVVSRRGRMRTRVETRGRDKPPRGLVFVPWFDAGQLINKVTLDATDPISFQTDFKKCAVKIVKV</sequence>
<protein>
    <recommendedName>
        <fullName evidence="1">Periplasmic nitrate reductase</fullName>
        <ecNumber evidence="1">1.9.6.1</ecNumber>
    </recommendedName>
</protein>
<proteinExistence type="inferred from homology"/>
<keyword id="KW-0004">4Fe-4S</keyword>
<keyword id="KW-0249">Electron transport</keyword>
<keyword id="KW-0408">Iron</keyword>
<keyword id="KW-0411">Iron-sulfur</keyword>
<keyword id="KW-0479">Metal-binding</keyword>
<keyword id="KW-0500">Molybdenum</keyword>
<keyword id="KW-0534">Nitrate assimilation</keyword>
<keyword id="KW-0560">Oxidoreductase</keyword>
<keyword id="KW-0574">Periplasm</keyword>
<keyword id="KW-0732">Signal</keyword>
<keyword id="KW-0813">Transport</keyword>
<organism>
    <name type="scientific">Bordetella bronchiseptica (strain ATCC BAA-588 / NCTC 13252 / RB50)</name>
    <name type="common">Alcaligenes bronchisepticus</name>
    <dbReference type="NCBI Taxonomy" id="257310"/>
    <lineage>
        <taxon>Bacteria</taxon>
        <taxon>Pseudomonadati</taxon>
        <taxon>Pseudomonadota</taxon>
        <taxon>Betaproteobacteria</taxon>
        <taxon>Burkholderiales</taxon>
        <taxon>Alcaligenaceae</taxon>
        <taxon>Bordetella</taxon>
    </lineage>
</organism>